<comment type="function">
    <text evidence="1">ATPase subunit of a proteasome-like degradation complex; this subunit has chaperone activity. The binding of ATP and its subsequent hydrolysis by HslU are essential for unfolding of protein substrates subsequently hydrolyzed by HslV. HslU recognizes the N-terminal part of its protein substrates and unfolds these before they are guided to HslV for hydrolysis.</text>
</comment>
<comment type="subunit">
    <text evidence="1">A double ring-shaped homohexamer of HslV is capped on each side by a ring-shaped HslU homohexamer. The assembly of the HslU/HslV complex is dependent on binding of ATP.</text>
</comment>
<comment type="subcellular location">
    <subcellularLocation>
        <location evidence="1">Cytoplasm</location>
    </subcellularLocation>
</comment>
<comment type="similarity">
    <text evidence="1">Belongs to the ClpX chaperone family. HslU subfamily.</text>
</comment>
<keyword id="KW-0067">ATP-binding</keyword>
<keyword id="KW-0143">Chaperone</keyword>
<keyword id="KW-0963">Cytoplasm</keyword>
<keyword id="KW-0547">Nucleotide-binding</keyword>
<keyword id="KW-0346">Stress response</keyword>
<name>HSLU_ENT38</name>
<accession>A4WG67</accession>
<sequence>MSEMTPREIVSELNKHIIGQDNAKRSVAIALRNRWRRMQLDEELRHEVTPKNILMIGPTGVGKTEIARRLAKLANAPFIKVEATKFTEVGYVGKEVDSIIRDLADSAMKMVRVQAIEKNRYRAEEMAEERILDVLIPPAKNNWGQNEQPQEPSAARQAFRKKLREGQLDDKEIEIDLAAAPMGVEIMSPPGMEEMTSQLQSMFQNLGGQKQKPRKLKIKDAMKLLIEEEAAKLVNPEELKQDAIDAVEQHGIVFIDEIDKICKRGESNGPDVSREGVQRDLLPLVEGCTVSTKHGMVKTDHILFIASGAFQVAKPSDLIPELQGRLPIRVELQALTTDDFERILTEPNASITVQYKALMATEGVTIEFTADGIKRIAQAAWQVNETTENIGARRLHTVLERLVEDISYEASDLNGQSITIDADYVSKHLDALVADEDLSRFIL</sequence>
<protein>
    <recommendedName>
        <fullName evidence="1">ATP-dependent protease ATPase subunit HslU</fullName>
    </recommendedName>
    <alternativeName>
        <fullName evidence="1">Unfoldase HslU</fullName>
    </alternativeName>
</protein>
<proteinExistence type="inferred from homology"/>
<organism>
    <name type="scientific">Enterobacter sp. (strain 638)</name>
    <dbReference type="NCBI Taxonomy" id="399742"/>
    <lineage>
        <taxon>Bacteria</taxon>
        <taxon>Pseudomonadati</taxon>
        <taxon>Pseudomonadota</taxon>
        <taxon>Gammaproteobacteria</taxon>
        <taxon>Enterobacterales</taxon>
        <taxon>Enterobacteriaceae</taxon>
        <taxon>Enterobacter</taxon>
    </lineage>
</organism>
<feature type="chain" id="PRO_1000059024" description="ATP-dependent protease ATPase subunit HslU">
    <location>
        <begin position="1"/>
        <end position="443"/>
    </location>
</feature>
<feature type="binding site" evidence="1">
    <location>
        <position position="18"/>
    </location>
    <ligand>
        <name>ATP</name>
        <dbReference type="ChEBI" id="CHEBI:30616"/>
    </ligand>
</feature>
<feature type="binding site" evidence="1">
    <location>
        <begin position="60"/>
        <end position="65"/>
    </location>
    <ligand>
        <name>ATP</name>
        <dbReference type="ChEBI" id="CHEBI:30616"/>
    </ligand>
</feature>
<feature type="binding site" evidence="1">
    <location>
        <position position="256"/>
    </location>
    <ligand>
        <name>ATP</name>
        <dbReference type="ChEBI" id="CHEBI:30616"/>
    </ligand>
</feature>
<feature type="binding site" evidence="1">
    <location>
        <position position="321"/>
    </location>
    <ligand>
        <name>ATP</name>
        <dbReference type="ChEBI" id="CHEBI:30616"/>
    </ligand>
</feature>
<feature type="binding site" evidence="1">
    <location>
        <position position="393"/>
    </location>
    <ligand>
        <name>ATP</name>
        <dbReference type="ChEBI" id="CHEBI:30616"/>
    </ligand>
</feature>
<reference key="1">
    <citation type="journal article" date="2010" name="PLoS Genet.">
        <title>Genome sequence of the plant growth promoting endophytic bacterium Enterobacter sp. 638.</title>
        <authorList>
            <person name="Taghavi S."/>
            <person name="van der Lelie D."/>
            <person name="Hoffman A."/>
            <person name="Zhang Y.B."/>
            <person name="Walla M.D."/>
            <person name="Vangronsveld J."/>
            <person name="Newman L."/>
            <person name="Monchy S."/>
        </authorList>
    </citation>
    <scope>NUCLEOTIDE SEQUENCE [LARGE SCALE GENOMIC DNA]</scope>
    <source>
        <strain>638</strain>
    </source>
</reference>
<evidence type="ECO:0000255" key="1">
    <source>
        <dbReference type="HAMAP-Rule" id="MF_00249"/>
    </source>
</evidence>
<gene>
    <name evidence="1" type="primary">hslU</name>
    <name type="ordered locus">Ent638_4042</name>
</gene>
<dbReference type="EMBL" id="CP000653">
    <property type="protein sequence ID" value="ABP62697.1"/>
    <property type="molecule type" value="Genomic_DNA"/>
</dbReference>
<dbReference type="RefSeq" id="WP_015961001.1">
    <property type="nucleotide sequence ID" value="NC_009436.1"/>
</dbReference>
<dbReference type="SMR" id="A4WG67"/>
<dbReference type="STRING" id="399742.Ent638_4042"/>
<dbReference type="KEGG" id="ent:Ent638_4042"/>
<dbReference type="eggNOG" id="COG1220">
    <property type="taxonomic scope" value="Bacteria"/>
</dbReference>
<dbReference type="HOGENOM" id="CLU_033123_0_0_6"/>
<dbReference type="OrthoDB" id="9804062at2"/>
<dbReference type="Proteomes" id="UP000000230">
    <property type="component" value="Chromosome"/>
</dbReference>
<dbReference type="GO" id="GO:0009376">
    <property type="term" value="C:HslUV protease complex"/>
    <property type="evidence" value="ECO:0007669"/>
    <property type="project" value="UniProtKB-UniRule"/>
</dbReference>
<dbReference type="GO" id="GO:0005524">
    <property type="term" value="F:ATP binding"/>
    <property type="evidence" value="ECO:0007669"/>
    <property type="project" value="UniProtKB-UniRule"/>
</dbReference>
<dbReference type="GO" id="GO:0016887">
    <property type="term" value="F:ATP hydrolysis activity"/>
    <property type="evidence" value="ECO:0007669"/>
    <property type="project" value="InterPro"/>
</dbReference>
<dbReference type="GO" id="GO:0008233">
    <property type="term" value="F:peptidase activity"/>
    <property type="evidence" value="ECO:0007669"/>
    <property type="project" value="InterPro"/>
</dbReference>
<dbReference type="GO" id="GO:0036402">
    <property type="term" value="F:proteasome-activating activity"/>
    <property type="evidence" value="ECO:0007669"/>
    <property type="project" value="UniProtKB-UniRule"/>
</dbReference>
<dbReference type="GO" id="GO:0043335">
    <property type="term" value="P:protein unfolding"/>
    <property type="evidence" value="ECO:0007669"/>
    <property type="project" value="UniProtKB-UniRule"/>
</dbReference>
<dbReference type="GO" id="GO:0051603">
    <property type="term" value="P:proteolysis involved in protein catabolic process"/>
    <property type="evidence" value="ECO:0007669"/>
    <property type="project" value="TreeGrafter"/>
</dbReference>
<dbReference type="CDD" id="cd19498">
    <property type="entry name" value="RecA-like_HslU"/>
    <property type="match status" value="1"/>
</dbReference>
<dbReference type="FunFam" id="1.10.8.10:FF:000028">
    <property type="entry name" value="ATP-dependent protease ATPase subunit HslU"/>
    <property type="match status" value="2"/>
</dbReference>
<dbReference type="FunFam" id="1.10.8.60:FF:000027">
    <property type="entry name" value="ATP-dependent protease ATPase subunit HslU"/>
    <property type="match status" value="1"/>
</dbReference>
<dbReference type="FunFam" id="3.40.50.300:FF:000213">
    <property type="entry name" value="ATP-dependent protease ATPase subunit HslU"/>
    <property type="match status" value="1"/>
</dbReference>
<dbReference type="FunFam" id="3.40.50.300:FF:000220">
    <property type="entry name" value="ATP-dependent protease ATPase subunit HslU"/>
    <property type="match status" value="1"/>
</dbReference>
<dbReference type="Gene3D" id="1.10.8.60">
    <property type="match status" value="1"/>
</dbReference>
<dbReference type="Gene3D" id="1.10.8.10">
    <property type="entry name" value="DNA helicase RuvA subunit, C-terminal domain"/>
    <property type="match status" value="1"/>
</dbReference>
<dbReference type="Gene3D" id="3.40.50.300">
    <property type="entry name" value="P-loop containing nucleotide triphosphate hydrolases"/>
    <property type="match status" value="2"/>
</dbReference>
<dbReference type="HAMAP" id="MF_00249">
    <property type="entry name" value="HslU"/>
    <property type="match status" value="1"/>
</dbReference>
<dbReference type="InterPro" id="IPR003593">
    <property type="entry name" value="AAA+_ATPase"/>
</dbReference>
<dbReference type="InterPro" id="IPR050052">
    <property type="entry name" value="ATP-dep_Clp_protease_ClpX"/>
</dbReference>
<dbReference type="InterPro" id="IPR003959">
    <property type="entry name" value="ATPase_AAA_core"/>
</dbReference>
<dbReference type="InterPro" id="IPR019489">
    <property type="entry name" value="Clp_ATPase_C"/>
</dbReference>
<dbReference type="InterPro" id="IPR004491">
    <property type="entry name" value="HslU"/>
</dbReference>
<dbReference type="InterPro" id="IPR027417">
    <property type="entry name" value="P-loop_NTPase"/>
</dbReference>
<dbReference type="NCBIfam" id="TIGR00390">
    <property type="entry name" value="hslU"/>
    <property type="match status" value="1"/>
</dbReference>
<dbReference type="NCBIfam" id="NF003544">
    <property type="entry name" value="PRK05201.1"/>
    <property type="match status" value="1"/>
</dbReference>
<dbReference type="PANTHER" id="PTHR48102">
    <property type="entry name" value="ATP-DEPENDENT CLP PROTEASE ATP-BINDING SUBUNIT CLPX-LIKE, MITOCHONDRIAL-RELATED"/>
    <property type="match status" value="1"/>
</dbReference>
<dbReference type="PANTHER" id="PTHR48102:SF3">
    <property type="entry name" value="ATP-DEPENDENT PROTEASE ATPASE SUBUNIT HSLU"/>
    <property type="match status" value="1"/>
</dbReference>
<dbReference type="Pfam" id="PF00004">
    <property type="entry name" value="AAA"/>
    <property type="match status" value="1"/>
</dbReference>
<dbReference type="Pfam" id="PF07724">
    <property type="entry name" value="AAA_2"/>
    <property type="match status" value="1"/>
</dbReference>
<dbReference type="SMART" id="SM00382">
    <property type="entry name" value="AAA"/>
    <property type="match status" value="1"/>
</dbReference>
<dbReference type="SMART" id="SM01086">
    <property type="entry name" value="ClpB_D2-small"/>
    <property type="match status" value="1"/>
</dbReference>
<dbReference type="SUPFAM" id="SSF52540">
    <property type="entry name" value="P-loop containing nucleoside triphosphate hydrolases"/>
    <property type="match status" value="1"/>
</dbReference>